<comment type="function">
    <text evidence="2">Involved in base excision repair of DNA damaged by oxidation or by mutagenic agents. Acts as a DNA glycosylase that recognizes and removes damaged bases. Has a preference for oxidized purines, such as 7,8-dihydro-8-oxoguanine (8-oxoG). Has AP (apurinic/apyrimidinic) lyase activity and introduces nicks in the DNA strand. Cleaves the DNA backbone by beta-delta elimination to generate a single-strand break at the site of the removed base with both 3'- and 5'-phosphates.</text>
</comment>
<comment type="catalytic activity">
    <reaction evidence="2">
        <text>Hydrolysis of DNA containing ring-opened 7-methylguanine residues, releasing 2,6-diamino-4-hydroxy-5-(N-methyl)formamidopyrimidine.</text>
        <dbReference type="EC" id="3.2.2.23"/>
    </reaction>
</comment>
<comment type="catalytic activity">
    <reaction evidence="2">
        <text>2'-deoxyribonucleotide-(2'-deoxyribose 5'-phosphate)-2'-deoxyribonucleotide-DNA = a 3'-end 2'-deoxyribonucleotide-(2,3-dehydro-2,3-deoxyribose 5'-phosphate)-DNA + a 5'-end 5'-phospho-2'-deoxyribonucleoside-DNA + H(+)</text>
        <dbReference type="Rhea" id="RHEA:66592"/>
        <dbReference type="Rhea" id="RHEA-COMP:13180"/>
        <dbReference type="Rhea" id="RHEA-COMP:16897"/>
        <dbReference type="Rhea" id="RHEA-COMP:17067"/>
        <dbReference type="ChEBI" id="CHEBI:15378"/>
        <dbReference type="ChEBI" id="CHEBI:136412"/>
        <dbReference type="ChEBI" id="CHEBI:157695"/>
        <dbReference type="ChEBI" id="CHEBI:167181"/>
        <dbReference type="EC" id="4.2.99.18"/>
    </reaction>
</comment>
<comment type="cofactor">
    <cofactor evidence="2">
        <name>Zn(2+)</name>
        <dbReference type="ChEBI" id="CHEBI:29105"/>
    </cofactor>
    <text evidence="2">Binds 1 zinc ion per subunit.</text>
</comment>
<comment type="subunit">
    <text evidence="2">Monomer.</text>
</comment>
<comment type="similarity">
    <text evidence="2">Belongs to the FPG family.</text>
</comment>
<keyword id="KW-0227">DNA damage</keyword>
<keyword id="KW-0234">DNA repair</keyword>
<keyword id="KW-0238">DNA-binding</keyword>
<keyword id="KW-0326">Glycosidase</keyword>
<keyword id="KW-0378">Hydrolase</keyword>
<keyword id="KW-0456">Lyase</keyword>
<keyword id="KW-0479">Metal-binding</keyword>
<keyword id="KW-0511">Multifunctional enzyme</keyword>
<keyword id="KW-0862">Zinc</keyword>
<keyword id="KW-0863">Zinc-finger</keyword>
<sequence length="283" mass="31275">MPELPEVEVVRRGLHSHVVGKTIGAVRVHHPRAVRRHEAGPADLTARLLGARITGTDRRGKYLWLLLDGRDTALVVHLGMSGQMLLGAVPRAEHVRISALLDDGTVLSFADQRTFGGWMLADLLEVDGSVVPEPVAHLARDPLDPRFDADAVVKVLRRKHSEIKRQLLDQQVVSGIGNIYADEALWRAKVHGARIADALTRKQLTAVLDAAADVMRDALAKGGTSFDSLYVNVNGESGYFDRSLDAYGREGESCRRCGAVMRREKFMNRSSFYCPKCQPRPRL</sequence>
<reference key="1">
    <citation type="submission" date="2006-10" db="EMBL/GenBank/DDBJ databases">
        <authorList>
            <person name="Fleischmann R.D."/>
            <person name="Dodson R.J."/>
            <person name="Haft D.H."/>
            <person name="Merkel J.S."/>
            <person name="Nelson W.C."/>
            <person name="Fraser C.M."/>
        </authorList>
    </citation>
    <scope>NUCLEOTIDE SEQUENCE [LARGE SCALE GENOMIC DNA]</scope>
    <source>
        <strain>104</strain>
    </source>
</reference>
<organism>
    <name type="scientific">Mycobacterium avium (strain 104)</name>
    <dbReference type="NCBI Taxonomy" id="243243"/>
    <lineage>
        <taxon>Bacteria</taxon>
        <taxon>Bacillati</taxon>
        <taxon>Actinomycetota</taxon>
        <taxon>Actinomycetes</taxon>
        <taxon>Mycobacteriales</taxon>
        <taxon>Mycobacteriaceae</taxon>
        <taxon>Mycobacterium</taxon>
        <taxon>Mycobacterium avium complex (MAC)</taxon>
    </lineage>
</organism>
<protein>
    <recommendedName>
        <fullName evidence="2">Formamidopyrimidine-DNA glycosylase</fullName>
        <shortName evidence="2">Fapy-DNA glycosylase</shortName>
        <ecNumber evidence="2">3.2.2.23</ecNumber>
    </recommendedName>
    <alternativeName>
        <fullName evidence="2">DNA-(apurinic or apyrimidinic site) lyase MutM</fullName>
        <shortName evidence="2">AP lyase MutM</shortName>
        <ecNumber evidence="2">4.2.99.18</ecNumber>
    </alternativeName>
</protein>
<evidence type="ECO:0000250" key="1"/>
<evidence type="ECO:0000255" key="2">
    <source>
        <dbReference type="HAMAP-Rule" id="MF_00103"/>
    </source>
</evidence>
<gene>
    <name evidence="2" type="primary">mutM</name>
    <name evidence="2" type="synonym">fpg</name>
    <name type="ordered locus">MAV_3782</name>
</gene>
<name>FPG_MYCA1</name>
<accession>A0QJ66</accession>
<feature type="initiator methionine" description="Removed" evidence="1">
    <location>
        <position position="1"/>
    </location>
</feature>
<feature type="chain" id="PRO_1000008717" description="Formamidopyrimidine-DNA glycosylase">
    <location>
        <begin position="2"/>
        <end position="283"/>
    </location>
</feature>
<feature type="zinc finger region" description="FPG-type" evidence="2">
    <location>
        <begin position="245"/>
        <end position="279"/>
    </location>
</feature>
<feature type="active site" description="Schiff-base intermediate with DNA" evidence="2">
    <location>
        <position position="2"/>
    </location>
</feature>
<feature type="active site" description="Proton donor" evidence="2">
    <location>
        <position position="3"/>
    </location>
</feature>
<feature type="active site" description="Proton donor; for beta-elimination activity" evidence="2">
    <location>
        <position position="61"/>
    </location>
</feature>
<feature type="active site" description="Proton donor; for delta-elimination activity" evidence="2">
    <location>
        <position position="269"/>
    </location>
</feature>
<feature type="binding site" evidence="2">
    <location>
        <position position="94"/>
    </location>
    <ligand>
        <name>DNA</name>
        <dbReference type="ChEBI" id="CHEBI:16991"/>
    </ligand>
</feature>
<feature type="binding site" evidence="2">
    <location>
        <position position="113"/>
    </location>
    <ligand>
        <name>DNA</name>
        <dbReference type="ChEBI" id="CHEBI:16991"/>
    </ligand>
</feature>
<feature type="binding site" evidence="2">
    <location>
        <position position="159"/>
    </location>
    <ligand>
        <name>DNA</name>
        <dbReference type="ChEBI" id="CHEBI:16991"/>
    </ligand>
</feature>
<proteinExistence type="inferred from homology"/>
<dbReference type="EC" id="3.2.2.23" evidence="2"/>
<dbReference type="EC" id="4.2.99.18" evidence="2"/>
<dbReference type="EMBL" id="CP000479">
    <property type="protein sequence ID" value="ABK66452.1"/>
    <property type="molecule type" value="Genomic_DNA"/>
</dbReference>
<dbReference type="RefSeq" id="WP_009978189.1">
    <property type="nucleotide sequence ID" value="NC_008595.1"/>
</dbReference>
<dbReference type="SMR" id="A0QJ66"/>
<dbReference type="KEGG" id="mav:MAV_3782"/>
<dbReference type="HOGENOM" id="CLU_038423_1_2_11"/>
<dbReference type="Proteomes" id="UP000001574">
    <property type="component" value="Chromosome"/>
</dbReference>
<dbReference type="GO" id="GO:0034039">
    <property type="term" value="F:8-oxo-7,8-dihydroguanine DNA N-glycosylase activity"/>
    <property type="evidence" value="ECO:0007669"/>
    <property type="project" value="TreeGrafter"/>
</dbReference>
<dbReference type="GO" id="GO:0140078">
    <property type="term" value="F:class I DNA-(apurinic or apyrimidinic site) endonuclease activity"/>
    <property type="evidence" value="ECO:0007669"/>
    <property type="project" value="UniProtKB-EC"/>
</dbReference>
<dbReference type="GO" id="GO:0003684">
    <property type="term" value="F:damaged DNA binding"/>
    <property type="evidence" value="ECO:0007669"/>
    <property type="project" value="InterPro"/>
</dbReference>
<dbReference type="GO" id="GO:0008270">
    <property type="term" value="F:zinc ion binding"/>
    <property type="evidence" value="ECO:0007669"/>
    <property type="project" value="UniProtKB-UniRule"/>
</dbReference>
<dbReference type="GO" id="GO:0006284">
    <property type="term" value="P:base-excision repair"/>
    <property type="evidence" value="ECO:0007669"/>
    <property type="project" value="InterPro"/>
</dbReference>
<dbReference type="CDD" id="cd08966">
    <property type="entry name" value="EcFpg-like_N"/>
    <property type="match status" value="1"/>
</dbReference>
<dbReference type="FunFam" id="1.10.8.50:FF:000003">
    <property type="entry name" value="Formamidopyrimidine-DNA glycosylase"/>
    <property type="match status" value="1"/>
</dbReference>
<dbReference type="FunFam" id="3.20.190.10:FF:000006">
    <property type="entry name" value="Formamidopyrimidine-DNA glycosylase"/>
    <property type="match status" value="1"/>
</dbReference>
<dbReference type="Gene3D" id="1.10.8.50">
    <property type="match status" value="1"/>
</dbReference>
<dbReference type="Gene3D" id="3.20.190.10">
    <property type="entry name" value="MutM-like, N-terminal"/>
    <property type="match status" value="1"/>
</dbReference>
<dbReference type="HAMAP" id="MF_00103">
    <property type="entry name" value="Fapy_DNA_glycosyl"/>
    <property type="match status" value="1"/>
</dbReference>
<dbReference type="InterPro" id="IPR015886">
    <property type="entry name" value="DNA_glyclase/AP_lyase_DNA-bd"/>
</dbReference>
<dbReference type="InterPro" id="IPR015887">
    <property type="entry name" value="DNA_glyclase_Znf_dom_DNA_BS"/>
</dbReference>
<dbReference type="InterPro" id="IPR020629">
    <property type="entry name" value="Formamido-pyr_DNA_Glyclase"/>
</dbReference>
<dbReference type="InterPro" id="IPR012319">
    <property type="entry name" value="FPG_cat"/>
</dbReference>
<dbReference type="InterPro" id="IPR035937">
    <property type="entry name" value="MutM-like_N-ter"/>
</dbReference>
<dbReference type="InterPro" id="IPR010979">
    <property type="entry name" value="Ribosomal_uS13-like_H2TH"/>
</dbReference>
<dbReference type="InterPro" id="IPR000214">
    <property type="entry name" value="Znf_DNA_glyclase/AP_lyase"/>
</dbReference>
<dbReference type="InterPro" id="IPR010663">
    <property type="entry name" value="Znf_FPG/IleRS"/>
</dbReference>
<dbReference type="NCBIfam" id="TIGR00577">
    <property type="entry name" value="fpg"/>
    <property type="match status" value="1"/>
</dbReference>
<dbReference type="NCBIfam" id="NF002211">
    <property type="entry name" value="PRK01103.1"/>
    <property type="match status" value="1"/>
</dbReference>
<dbReference type="PANTHER" id="PTHR22993">
    <property type="entry name" value="FORMAMIDOPYRIMIDINE-DNA GLYCOSYLASE"/>
    <property type="match status" value="1"/>
</dbReference>
<dbReference type="PANTHER" id="PTHR22993:SF9">
    <property type="entry name" value="FORMAMIDOPYRIMIDINE-DNA GLYCOSYLASE"/>
    <property type="match status" value="1"/>
</dbReference>
<dbReference type="Pfam" id="PF01149">
    <property type="entry name" value="Fapy_DNA_glyco"/>
    <property type="match status" value="1"/>
</dbReference>
<dbReference type="Pfam" id="PF06831">
    <property type="entry name" value="H2TH"/>
    <property type="match status" value="1"/>
</dbReference>
<dbReference type="Pfam" id="PF06827">
    <property type="entry name" value="zf-FPG_IleRS"/>
    <property type="match status" value="1"/>
</dbReference>
<dbReference type="SMART" id="SM00898">
    <property type="entry name" value="Fapy_DNA_glyco"/>
    <property type="match status" value="1"/>
</dbReference>
<dbReference type="SMART" id="SM01232">
    <property type="entry name" value="H2TH"/>
    <property type="match status" value="1"/>
</dbReference>
<dbReference type="SUPFAM" id="SSF57716">
    <property type="entry name" value="Glucocorticoid receptor-like (DNA-binding domain)"/>
    <property type="match status" value="1"/>
</dbReference>
<dbReference type="SUPFAM" id="SSF81624">
    <property type="entry name" value="N-terminal domain of MutM-like DNA repair proteins"/>
    <property type="match status" value="1"/>
</dbReference>
<dbReference type="SUPFAM" id="SSF46946">
    <property type="entry name" value="S13-like H2TH domain"/>
    <property type="match status" value="1"/>
</dbReference>
<dbReference type="PROSITE" id="PS51068">
    <property type="entry name" value="FPG_CAT"/>
    <property type="match status" value="1"/>
</dbReference>
<dbReference type="PROSITE" id="PS01242">
    <property type="entry name" value="ZF_FPG_1"/>
    <property type="match status" value="1"/>
</dbReference>
<dbReference type="PROSITE" id="PS51066">
    <property type="entry name" value="ZF_FPG_2"/>
    <property type="match status" value="1"/>
</dbReference>